<sequence>MSQEKKYVITYKGVKKLEEELEYLKTTKRKEITEKIKVALSFGDLSENSEYDEAKNDQAFVEGRIAQIENMLKNANVIDESELKNDVVSVGSKVMVKDYQFDEEIEFSIVGSAEADPIENKISNESPVGSALIGKKVGDEIEVNVPDGVDKYKILAIK</sequence>
<reference key="1">
    <citation type="journal article" date="2001" name="J. Bacteriol.">
        <title>Genome sequence and comparative analysis of the solvent-producing bacterium Clostridium acetobutylicum.</title>
        <authorList>
            <person name="Noelling J."/>
            <person name="Breton G."/>
            <person name="Omelchenko M.V."/>
            <person name="Makarova K.S."/>
            <person name="Zeng Q."/>
            <person name="Gibson R."/>
            <person name="Lee H.M."/>
            <person name="Dubois J."/>
            <person name="Qiu D."/>
            <person name="Hitti J."/>
            <person name="Wolf Y.I."/>
            <person name="Tatusov R.L."/>
            <person name="Sabathe F."/>
            <person name="Doucette-Stamm L.A."/>
            <person name="Soucaille P."/>
            <person name="Daly M.J."/>
            <person name="Bennett G.N."/>
            <person name="Koonin E.V."/>
            <person name="Smith D.R."/>
        </authorList>
    </citation>
    <scope>NUCLEOTIDE SEQUENCE [LARGE SCALE GENOMIC DNA]</scope>
    <source>
        <strain>ATCC 824 / DSM 792 / JCM 1419 / IAM 19013 / LMG 5710 / NBRC 13948 / NRRL B-527 / VKM B-1787 / 2291 / W</strain>
    </source>
</reference>
<feature type="chain" id="PRO_0000176919" description="Transcription elongation factor GreA">
    <location>
        <begin position="1"/>
        <end position="158"/>
    </location>
</feature>
<feature type="coiled-coil region" evidence="1">
    <location>
        <begin position="14"/>
        <end position="76"/>
    </location>
</feature>
<evidence type="ECO:0000255" key="1">
    <source>
        <dbReference type="HAMAP-Rule" id="MF_00105"/>
    </source>
</evidence>
<accession>Q97EB6</accession>
<organism>
    <name type="scientific">Clostridium acetobutylicum (strain ATCC 824 / DSM 792 / JCM 1419 / IAM 19013 / LMG 5710 / NBRC 13948 / NRRL B-527 / VKM B-1787 / 2291 / W)</name>
    <dbReference type="NCBI Taxonomy" id="272562"/>
    <lineage>
        <taxon>Bacteria</taxon>
        <taxon>Bacillati</taxon>
        <taxon>Bacillota</taxon>
        <taxon>Clostridia</taxon>
        <taxon>Eubacteriales</taxon>
        <taxon>Clostridiaceae</taxon>
        <taxon>Clostridium</taxon>
    </lineage>
</organism>
<comment type="function">
    <text evidence="1">Necessary for efficient RNA polymerase transcription elongation past template-encoded arresting sites. The arresting sites in DNA have the property of trapping a certain fraction of elongating RNA polymerases that pass through, resulting in locked ternary complexes. Cleavage of the nascent transcript by cleavage factors such as GreA or GreB allows the resumption of elongation from the new 3'terminus. GreA releases sequences of 2 to 3 nucleotides.</text>
</comment>
<comment type="similarity">
    <text evidence="1">Belongs to the GreA/GreB family.</text>
</comment>
<keyword id="KW-0175">Coiled coil</keyword>
<keyword id="KW-0238">DNA-binding</keyword>
<keyword id="KW-1185">Reference proteome</keyword>
<keyword id="KW-0804">Transcription</keyword>
<keyword id="KW-0805">Transcription regulation</keyword>
<gene>
    <name evidence="1" type="primary">greA</name>
    <name type="ordered locus">CA_C3198</name>
</gene>
<name>GREA_CLOAB</name>
<dbReference type="EMBL" id="AE001437">
    <property type="protein sequence ID" value="AAK81134.1"/>
    <property type="molecule type" value="Genomic_DNA"/>
</dbReference>
<dbReference type="PIR" id="C97293">
    <property type="entry name" value="C97293"/>
</dbReference>
<dbReference type="RefSeq" id="NP_349794.1">
    <property type="nucleotide sequence ID" value="NC_003030.1"/>
</dbReference>
<dbReference type="RefSeq" id="WP_010966474.1">
    <property type="nucleotide sequence ID" value="NC_003030.1"/>
</dbReference>
<dbReference type="SMR" id="Q97EB6"/>
<dbReference type="STRING" id="272562.CA_C3198"/>
<dbReference type="GeneID" id="44999691"/>
<dbReference type="KEGG" id="cac:CA_C3198"/>
<dbReference type="PATRIC" id="fig|272562.8.peg.3377"/>
<dbReference type="eggNOG" id="COG0782">
    <property type="taxonomic scope" value="Bacteria"/>
</dbReference>
<dbReference type="HOGENOM" id="CLU_101379_2_1_9"/>
<dbReference type="OrthoDB" id="9808774at2"/>
<dbReference type="Proteomes" id="UP000000814">
    <property type="component" value="Chromosome"/>
</dbReference>
<dbReference type="GO" id="GO:0003677">
    <property type="term" value="F:DNA binding"/>
    <property type="evidence" value="ECO:0007669"/>
    <property type="project" value="UniProtKB-UniRule"/>
</dbReference>
<dbReference type="GO" id="GO:0070063">
    <property type="term" value="F:RNA polymerase binding"/>
    <property type="evidence" value="ECO:0007669"/>
    <property type="project" value="InterPro"/>
</dbReference>
<dbReference type="GO" id="GO:0006354">
    <property type="term" value="P:DNA-templated transcription elongation"/>
    <property type="evidence" value="ECO:0007669"/>
    <property type="project" value="TreeGrafter"/>
</dbReference>
<dbReference type="GO" id="GO:0032784">
    <property type="term" value="P:regulation of DNA-templated transcription elongation"/>
    <property type="evidence" value="ECO:0007669"/>
    <property type="project" value="UniProtKB-UniRule"/>
</dbReference>
<dbReference type="FunFam" id="1.10.287.180:FF:000001">
    <property type="entry name" value="Transcription elongation factor GreA"/>
    <property type="match status" value="1"/>
</dbReference>
<dbReference type="FunFam" id="3.10.50.30:FF:000001">
    <property type="entry name" value="Transcription elongation factor GreA"/>
    <property type="match status" value="1"/>
</dbReference>
<dbReference type="Gene3D" id="3.10.50.30">
    <property type="entry name" value="Transcription elongation factor, GreA/GreB, C-terminal domain"/>
    <property type="match status" value="1"/>
</dbReference>
<dbReference type="Gene3D" id="1.10.287.180">
    <property type="entry name" value="Transcription elongation factor, GreA/GreB, N-terminal domain"/>
    <property type="match status" value="1"/>
</dbReference>
<dbReference type="HAMAP" id="MF_00105">
    <property type="entry name" value="GreA_GreB"/>
    <property type="match status" value="1"/>
</dbReference>
<dbReference type="InterPro" id="IPR036953">
    <property type="entry name" value="GreA/GreB_C_sf"/>
</dbReference>
<dbReference type="InterPro" id="IPR018151">
    <property type="entry name" value="TF_GreA/GreB_CS"/>
</dbReference>
<dbReference type="InterPro" id="IPR006359">
    <property type="entry name" value="Tscrpt_elong_fac_GreA"/>
</dbReference>
<dbReference type="InterPro" id="IPR028624">
    <property type="entry name" value="Tscrpt_elong_fac_GreA/B"/>
</dbReference>
<dbReference type="InterPro" id="IPR001437">
    <property type="entry name" value="Tscrpt_elong_fac_GreA/B_C"/>
</dbReference>
<dbReference type="InterPro" id="IPR023459">
    <property type="entry name" value="Tscrpt_elong_fac_GreA/B_fam"/>
</dbReference>
<dbReference type="InterPro" id="IPR022691">
    <property type="entry name" value="Tscrpt_elong_fac_GreA/B_N"/>
</dbReference>
<dbReference type="InterPro" id="IPR036805">
    <property type="entry name" value="Tscrpt_elong_fac_GreA/B_N_sf"/>
</dbReference>
<dbReference type="NCBIfam" id="TIGR01462">
    <property type="entry name" value="greA"/>
    <property type="match status" value="1"/>
</dbReference>
<dbReference type="NCBIfam" id="NF001261">
    <property type="entry name" value="PRK00226.1-2"/>
    <property type="match status" value="1"/>
</dbReference>
<dbReference type="NCBIfam" id="NF001263">
    <property type="entry name" value="PRK00226.1-4"/>
    <property type="match status" value="1"/>
</dbReference>
<dbReference type="PANTHER" id="PTHR30437">
    <property type="entry name" value="TRANSCRIPTION ELONGATION FACTOR GREA"/>
    <property type="match status" value="1"/>
</dbReference>
<dbReference type="PANTHER" id="PTHR30437:SF4">
    <property type="entry name" value="TRANSCRIPTION ELONGATION FACTOR GREA"/>
    <property type="match status" value="1"/>
</dbReference>
<dbReference type="Pfam" id="PF01272">
    <property type="entry name" value="GreA_GreB"/>
    <property type="match status" value="1"/>
</dbReference>
<dbReference type="Pfam" id="PF03449">
    <property type="entry name" value="GreA_GreB_N"/>
    <property type="match status" value="1"/>
</dbReference>
<dbReference type="PIRSF" id="PIRSF006092">
    <property type="entry name" value="GreA_GreB"/>
    <property type="match status" value="1"/>
</dbReference>
<dbReference type="SUPFAM" id="SSF54534">
    <property type="entry name" value="FKBP-like"/>
    <property type="match status" value="1"/>
</dbReference>
<dbReference type="SUPFAM" id="SSF46557">
    <property type="entry name" value="GreA transcript cleavage protein, N-terminal domain"/>
    <property type="match status" value="1"/>
</dbReference>
<dbReference type="PROSITE" id="PS00829">
    <property type="entry name" value="GREAB_1"/>
    <property type="match status" value="1"/>
</dbReference>
<dbReference type="PROSITE" id="PS00830">
    <property type="entry name" value="GREAB_2"/>
    <property type="match status" value="1"/>
</dbReference>
<proteinExistence type="inferred from homology"/>
<protein>
    <recommendedName>
        <fullName evidence="1">Transcription elongation factor GreA</fullName>
    </recommendedName>
    <alternativeName>
        <fullName evidence="1">Transcript cleavage factor GreA</fullName>
    </alternativeName>
</protein>